<name>RL16_COPPD</name>
<dbReference type="EMBL" id="CP001145">
    <property type="protein sequence ID" value="ACI18158.1"/>
    <property type="molecule type" value="Genomic_DNA"/>
</dbReference>
<dbReference type="RefSeq" id="WP_012544808.1">
    <property type="nucleotide sequence ID" value="NC_011295.1"/>
</dbReference>
<dbReference type="SMR" id="B5Y981"/>
<dbReference type="STRING" id="309798.COPRO5265_1006"/>
<dbReference type="KEGG" id="cpo:COPRO5265_1006"/>
<dbReference type="eggNOG" id="COG0197">
    <property type="taxonomic scope" value="Bacteria"/>
</dbReference>
<dbReference type="HOGENOM" id="CLU_078858_2_1_9"/>
<dbReference type="OrthoDB" id="9802589at2"/>
<dbReference type="Proteomes" id="UP000001732">
    <property type="component" value="Chromosome"/>
</dbReference>
<dbReference type="GO" id="GO:0022625">
    <property type="term" value="C:cytosolic large ribosomal subunit"/>
    <property type="evidence" value="ECO:0007669"/>
    <property type="project" value="TreeGrafter"/>
</dbReference>
<dbReference type="GO" id="GO:0019843">
    <property type="term" value="F:rRNA binding"/>
    <property type="evidence" value="ECO:0007669"/>
    <property type="project" value="UniProtKB-UniRule"/>
</dbReference>
<dbReference type="GO" id="GO:0003735">
    <property type="term" value="F:structural constituent of ribosome"/>
    <property type="evidence" value="ECO:0007669"/>
    <property type="project" value="InterPro"/>
</dbReference>
<dbReference type="GO" id="GO:0000049">
    <property type="term" value="F:tRNA binding"/>
    <property type="evidence" value="ECO:0007669"/>
    <property type="project" value="UniProtKB-KW"/>
</dbReference>
<dbReference type="GO" id="GO:0006412">
    <property type="term" value="P:translation"/>
    <property type="evidence" value="ECO:0007669"/>
    <property type="project" value="UniProtKB-UniRule"/>
</dbReference>
<dbReference type="CDD" id="cd01433">
    <property type="entry name" value="Ribosomal_L16_L10e"/>
    <property type="match status" value="1"/>
</dbReference>
<dbReference type="FunFam" id="3.90.1170.10:FF:000001">
    <property type="entry name" value="50S ribosomal protein L16"/>
    <property type="match status" value="1"/>
</dbReference>
<dbReference type="Gene3D" id="3.90.1170.10">
    <property type="entry name" value="Ribosomal protein L10e/L16"/>
    <property type="match status" value="1"/>
</dbReference>
<dbReference type="HAMAP" id="MF_01342">
    <property type="entry name" value="Ribosomal_uL16"/>
    <property type="match status" value="1"/>
</dbReference>
<dbReference type="InterPro" id="IPR047873">
    <property type="entry name" value="Ribosomal_uL16"/>
</dbReference>
<dbReference type="InterPro" id="IPR000114">
    <property type="entry name" value="Ribosomal_uL16_bact-type"/>
</dbReference>
<dbReference type="InterPro" id="IPR020798">
    <property type="entry name" value="Ribosomal_uL16_CS"/>
</dbReference>
<dbReference type="InterPro" id="IPR016180">
    <property type="entry name" value="Ribosomal_uL16_dom"/>
</dbReference>
<dbReference type="InterPro" id="IPR036920">
    <property type="entry name" value="Ribosomal_uL16_sf"/>
</dbReference>
<dbReference type="NCBIfam" id="TIGR01164">
    <property type="entry name" value="rplP_bact"/>
    <property type="match status" value="1"/>
</dbReference>
<dbReference type="PANTHER" id="PTHR12220">
    <property type="entry name" value="50S/60S RIBOSOMAL PROTEIN L16"/>
    <property type="match status" value="1"/>
</dbReference>
<dbReference type="PANTHER" id="PTHR12220:SF13">
    <property type="entry name" value="LARGE RIBOSOMAL SUBUNIT PROTEIN UL16M"/>
    <property type="match status" value="1"/>
</dbReference>
<dbReference type="Pfam" id="PF00252">
    <property type="entry name" value="Ribosomal_L16"/>
    <property type="match status" value="1"/>
</dbReference>
<dbReference type="PRINTS" id="PR00060">
    <property type="entry name" value="RIBOSOMALL16"/>
</dbReference>
<dbReference type="SUPFAM" id="SSF54686">
    <property type="entry name" value="Ribosomal protein L16p/L10e"/>
    <property type="match status" value="1"/>
</dbReference>
<dbReference type="PROSITE" id="PS00701">
    <property type="entry name" value="RIBOSOMAL_L16_2"/>
    <property type="match status" value="1"/>
</dbReference>
<feature type="chain" id="PRO_1000142951" description="Large ribosomal subunit protein uL16">
    <location>
        <begin position="1"/>
        <end position="135"/>
    </location>
</feature>
<keyword id="KW-1185">Reference proteome</keyword>
<keyword id="KW-0687">Ribonucleoprotein</keyword>
<keyword id="KW-0689">Ribosomal protein</keyword>
<keyword id="KW-0694">RNA-binding</keyword>
<keyword id="KW-0699">rRNA-binding</keyword>
<keyword id="KW-0820">tRNA-binding</keyword>
<evidence type="ECO:0000255" key="1">
    <source>
        <dbReference type="HAMAP-Rule" id="MF_01342"/>
    </source>
</evidence>
<evidence type="ECO:0000305" key="2"/>
<accession>B5Y981</accession>
<gene>
    <name evidence="1" type="primary">rplP</name>
    <name type="ordered locus">COPRO5265_1006</name>
</gene>
<proteinExistence type="inferred from homology"/>
<protein>
    <recommendedName>
        <fullName evidence="1">Large ribosomal subunit protein uL16</fullName>
    </recommendedName>
    <alternativeName>
        <fullName evidence="2">50S ribosomal protein L16</fullName>
    </alternativeName>
</protein>
<comment type="function">
    <text evidence="1">Binds 23S rRNA and is also seen to make contacts with the A and possibly P site tRNAs.</text>
</comment>
<comment type="subunit">
    <text evidence="1">Part of the 50S ribosomal subunit.</text>
</comment>
<comment type="similarity">
    <text evidence="1">Belongs to the universal ribosomal protein uL16 family.</text>
</comment>
<sequence>MLMPKRVKYRKNHLPHIKGKETRGLKLAFGDYGIQAVGRGYVDSRMIESCRVIMAKNIGKTGKYWIRIFPDVAWTKKPLEVRMGGGKGDPEKWIFPVKPGRIMFELTGVDEDTAKHIARLIGFRLPFEVRLISRV</sequence>
<organism>
    <name type="scientific">Coprothermobacter proteolyticus (strain ATCC 35245 / DSM 5265 / OCM 4 / BT)</name>
    <dbReference type="NCBI Taxonomy" id="309798"/>
    <lineage>
        <taxon>Bacteria</taxon>
        <taxon>Pseudomonadati</taxon>
        <taxon>Coprothermobacterota</taxon>
        <taxon>Coprothermobacteria</taxon>
        <taxon>Coprothermobacterales</taxon>
        <taxon>Coprothermobacteraceae</taxon>
        <taxon>Coprothermobacter</taxon>
    </lineage>
</organism>
<reference key="1">
    <citation type="submission" date="2008-08" db="EMBL/GenBank/DDBJ databases">
        <title>The complete genome sequence of Coprothermobacter proteolyticus strain ATCC 5245 / DSM 5265 / BT.</title>
        <authorList>
            <person name="Dodson R.J."/>
            <person name="Durkin A.S."/>
            <person name="Wu M."/>
            <person name="Eisen J."/>
            <person name="Sutton G."/>
        </authorList>
    </citation>
    <scope>NUCLEOTIDE SEQUENCE [LARGE SCALE GENOMIC DNA]</scope>
    <source>
        <strain>ATCC 35245 / DSM 5265 / OCM 4 / BT</strain>
    </source>
</reference>